<proteinExistence type="evidence at protein level"/>
<keyword id="KW-0002">3D-structure</keyword>
<keyword id="KW-0285">Flavoprotein</keyword>
<keyword id="KW-0288">FMN</keyword>
<keyword id="KW-0479">Metal-binding</keyword>
<keyword id="KW-0547">Nucleotide-binding</keyword>
<keyword id="KW-1185">Reference proteome</keyword>
<keyword id="KW-0862">Zinc</keyword>
<gene>
    <name evidence="6" type="ordered locus">BT_1263</name>
</gene>
<feature type="chain" id="PRO_0000458752" description="Protein ppBat">
    <location>
        <begin position="1"/>
        <end position="175"/>
    </location>
</feature>
<feature type="binding site" evidence="2 3 8 9">
    <location>
        <position position="74"/>
    </location>
    <ligand>
        <name>Zn(2+)</name>
        <dbReference type="ChEBI" id="CHEBI:29105"/>
        <note>structural</note>
    </ligand>
</feature>
<feature type="binding site" evidence="2 3 8 9">
    <location>
        <position position="111"/>
    </location>
    <ligand>
        <name>Zn(2+)</name>
        <dbReference type="ChEBI" id="CHEBI:29105"/>
        <note>structural</note>
    </ligand>
</feature>
<feature type="binding site" evidence="2 3 8 9">
    <location>
        <position position="161"/>
    </location>
    <ligand>
        <name>riboflavin</name>
        <dbReference type="ChEBI" id="CHEBI:57986"/>
        <note>ligand shared between homodimeric partners</note>
    </ligand>
</feature>
<feature type="binding site" evidence="1 2 3 8 9">
    <location>
        <position position="164"/>
    </location>
    <ligand>
        <name>riboflavin</name>
        <dbReference type="ChEBI" id="CHEBI:57986"/>
        <note>ligand shared between homodimeric partners</note>
    </ligand>
</feature>
<feature type="mutagenesis site" description="Loss of Zn(2+) binding. Decreases thermal stability. No effect on the binding of flavin derivatives." evidence="2">
    <original>C</original>
    <variation>A</variation>
    <location>
        <position position="74"/>
    </location>
</feature>
<feature type="mutagenesis site" description="Loss of Zn(2+) binding. Decreases thermal stability. No effect on the binding of flavin derivatives." evidence="2">
    <original>C</original>
    <variation>A</variation>
    <location>
        <position position="111"/>
    </location>
</feature>
<feature type="mutagenesis site" description="Loss of binding of flavin derivatives. No effect on homodimerization. No effect on thermal stability." evidence="1 2">
    <original>W</original>
    <variation>A</variation>
    <location>
        <position position="164"/>
    </location>
</feature>
<feature type="mutagenesis site" description="No effect on the binding of flavin derivatives; however, riboflavin dissociation rate is increased. No effect on homodimerization. No effect on thermal stability." evidence="1 2">
    <original>W</original>
    <variation>F</variation>
    <location>
        <position position="164"/>
    </location>
</feature>
<feature type="strand" evidence="10">
    <location>
        <begin position="4"/>
        <end position="9"/>
    </location>
</feature>
<feature type="strand" evidence="10">
    <location>
        <begin position="11"/>
        <end position="13"/>
    </location>
</feature>
<feature type="helix" evidence="10">
    <location>
        <begin position="15"/>
        <end position="27"/>
    </location>
</feature>
<feature type="strand" evidence="10">
    <location>
        <begin position="31"/>
        <end position="45"/>
    </location>
</feature>
<feature type="strand" evidence="10">
    <location>
        <begin position="50"/>
        <end position="52"/>
    </location>
</feature>
<feature type="strand" evidence="10">
    <location>
        <begin position="54"/>
        <end position="56"/>
    </location>
</feature>
<feature type="helix" evidence="10">
    <location>
        <begin position="57"/>
        <end position="60"/>
    </location>
</feature>
<feature type="helix" evidence="10">
    <location>
        <begin position="64"/>
        <end position="66"/>
    </location>
</feature>
<feature type="strand" evidence="10">
    <location>
        <begin position="68"/>
        <end position="73"/>
    </location>
</feature>
<feature type="helix" evidence="10">
    <location>
        <begin position="78"/>
        <end position="83"/>
    </location>
</feature>
<feature type="helix" evidence="10">
    <location>
        <begin position="88"/>
        <end position="102"/>
    </location>
</feature>
<feature type="strand" evidence="10">
    <location>
        <begin position="106"/>
        <end position="110"/>
    </location>
</feature>
<feature type="helix" evidence="10">
    <location>
        <begin position="113"/>
        <end position="119"/>
    </location>
</feature>
<feature type="turn" evidence="10">
    <location>
        <begin position="120"/>
        <end position="125"/>
    </location>
</feature>
<feature type="strand" evidence="10">
    <location>
        <begin position="127"/>
        <end position="129"/>
    </location>
</feature>
<feature type="helix" evidence="10">
    <location>
        <begin position="132"/>
        <end position="137"/>
    </location>
</feature>
<feature type="strand" evidence="10">
    <location>
        <begin position="140"/>
        <end position="151"/>
    </location>
</feature>
<feature type="strand" evidence="10">
    <location>
        <begin position="154"/>
        <end position="159"/>
    </location>
</feature>
<feature type="helix" evidence="10">
    <location>
        <begin position="160"/>
        <end position="165"/>
    </location>
</feature>
<feature type="helix" evidence="10">
    <location>
        <begin position="167"/>
        <end position="174"/>
    </location>
</feature>
<organism evidence="7">
    <name type="scientific">Bacteroides thetaiotaomicron (strain ATCC 29148 / DSM 2079 / JCM 5827 / CCUG 10774 / NCTC 10582 / VPI-5482 / E50)</name>
    <dbReference type="NCBI Taxonomy" id="226186"/>
    <lineage>
        <taxon>Bacteria</taxon>
        <taxon>Pseudomonadati</taxon>
        <taxon>Bacteroidota</taxon>
        <taxon>Bacteroidia</taxon>
        <taxon>Bacteroidales</taxon>
        <taxon>Bacteroidaceae</taxon>
        <taxon>Bacteroides</taxon>
    </lineage>
</organism>
<accession>Q8A8A4</accession>
<reference evidence="7" key="1">
    <citation type="journal article" date="2003" name="Science">
        <title>A genomic view of the human-Bacteroides thetaiotaomicron symbiosis.</title>
        <authorList>
            <person name="Xu J."/>
            <person name="Bjursell M.K."/>
            <person name="Himrod J."/>
            <person name="Deng S."/>
            <person name="Carmichael L.K."/>
            <person name="Chiang H.C."/>
            <person name="Hooper L.V."/>
            <person name="Gordon J.I."/>
        </authorList>
    </citation>
    <scope>NUCLEOTIDE SEQUENCE [LARGE SCALE GENOMIC DNA]</scope>
    <source>
        <strain evidence="7">ATCC 29148 / DSM 2079 / JCM 5827 / CCUG 10774 / NCTC 10582 / VPI-5482 / E50</strain>
    </source>
</reference>
<reference evidence="7" key="2">
    <citation type="journal article" date="2009" name="Proc. Natl. Acad. Sci. U.S.A.">
        <title>Characterizing a model human gut microbiota composed of members of its two dominant bacterial phyla.</title>
        <authorList>
            <person name="Mahowald M.A."/>
            <person name="Rey F.E."/>
            <person name="Seedorf H."/>
            <person name="Turnbaugh P.J."/>
            <person name="Fulton R.S."/>
            <person name="Wollam A."/>
            <person name="Shah N."/>
            <person name="Wang C."/>
            <person name="Magrini V."/>
            <person name="Wilson R.K."/>
            <person name="Cantarel B.L."/>
            <person name="Coutinho P.M."/>
            <person name="Henrissat B."/>
            <person name="Crock L.W."/>
            <person name="Russell A."/>
            <person name="Verberkmoes N.C."/>
            <person name="Hettich R.L."/>
            <person name="Gordon J.I."/>
        </authorList>
    </citation>
    <scope>NUCLEOTIDE SEQUENCE [LARGE SCALE GENOMIC DNA]</scope>
    <source>
        <strain evidence="7">ATCC 29148 / DSM 2079 / JCM 5827 / CCUG 10774 / NCTC 10582 / VPI-5482 / E50</strain>
    </source>
</reference>
<reference evidence="5" key="3">
    <citation type="journal article" date="2012" name="J. Biol. Chem.">
        <title>Reverse structural genomics: an unusual flavin-binding site in a putative protease from Bacteroides thetaiotaomicron.</title>
        <authorList>
            <person name="Knaus T."/>
            <person name="Eger E."/>
            <person name="Koop J."/>
            <person name="Stipsits S."/>
            <person name="Kinsland C.L."/>
            <person name="Ealick S.E."/>
            <person name="Macheroux P."/>
        </authorList>
    </citation>
    <scope>FUNCTION</scope>
    <scope>SUBUNIT</scope>
    <scope>MUTAGENESIS OF TRP-164</scope>
</reference>
<reference evidence="8" key="4">
    <citation type="submission" date="2008-03" db="PDB data bank">
        <title>The crystal structure of the putative protease I from Bacteroides thetaiotaomicron.</title>
        <authorList>
            <person name="Zhang R."/>
            <person name="Volkart L."/>
            <person name="Abdullah J."/>
            <person name="Joachimiak A."/>
        </authorList>
    </citation>
    <scope>X-RAY CRYSTALLOGRAPHY (1.99 ANGSTROMS) IN COMPLEX WITH FLAVIN AND ZN(2+)</scope>
</reference>
<reference evidence="9" key="5">
    <citation type="journal article" date="2014" name="Biochim. Biophys. Acta">
        <title>Structure and stability of an unusual zinc-binding protein from Bacteroides thetaiotaomicron.</title>
        <authorList>
            <person name="Knaus T."/>
            <person name="Uhl M.K."/>
            <person name="Monschein S."/>
            <person name="Moratti S."/>
            <person name="Gruber K."/>
            <person name="Macheroux P."/>
        </authorList>
    </citation>
    <scope>X-RAY CRYSTALLOGRAPHY (2.60 ANGSTROMS) IN COMPLEX WITH RIBOFLAVIN AND ZN(2+)</scope>
    <scope>FUNCTION</scope>
    <scope>MUTAGENESIS OF CYS-74; CYS-111 AND TRP-164</scope>
</reference>
<name>PPBAT_BACTN</name>
<comment type="function">
    <text evidence="1 2">Binds flavin derivatives, such as lumichrome, riboflavin, FMN, and FAD (PubMed:22718753, PubMed:25263158). May act as a flavin storage protein (PubMed:22718753, PubMed:25263158). Appears to lack proteolytic or chaperone activities (PubMed:25263158).</text>
</comment>
<comment type="subunit">
    <text evidence="1">Homodimer.</text>
</comment>
<evidence type="ECO:0000269" key="1">
    <source>
    </source>
</evidence>
<evidence type="ECO:0000269" key="2">
    <source>
    </source>
</evidence>
<evidence type="ECO:0000269" key="3">
    <source ref="4"/>
</evidence>
<evidence type="ECO:0000303" key="4">
    <source>
    </source>
</evidence>
<evidence type="ECO:0000305" key="5"/>
<evidence type="ECO:0000312" key="6">
    <source>
        <dbReference type="EMBL" id="AAO76370.1"/>
    </source>
</evidence>
<evidence type="ECO:0000312" key="7">
    <source>
        <dbReference type="Proteomes" id="UP000001414"/>
    </source>
</evidence>
<evidence type="ECO:0007744" key="8">
    <source>
        <dbReference type="PDB" id="3CNE"/>
    </source>
</evidence>
<evidence type="ECO:0007744" key="9">
    <source>
        <dbReference type="PDB" id="4D1Y"/>
    </source>
</evidence>
<evidence type="ECO:0007829" key="10">
    <source>
        <dbReference type="PDB" id="3CNE"/>
    </source>
</evidence>
<sequence length="175" mass="19150">MAKKVAVLAVNPVNGCGLFQYLEAFFENGISYKVFAVSDTKEIKTNSGMVLIVDDVIANLKGHEDEFDALVFSCGDAVPVFQQYANQPYNVDLMEVIKTFGEKGKMMIGHCAGAMMFDFTGITKGKKVAVHPLAKPAIQNGIATDEKSEIDGNFFTAQDENTIWTMLPKVIEALK</sequence>
<protein>
    <recommendedName>
        <fullName evidence="5">Protein ppBat</fullName>
    </recommendedName>
    <alternativeName>
        <fullName evidence="4">Putative protease</fullName>
        <shortName evidence="4">ppBat</shortName>
    </alternativeName>
</protein>
<dbReference type="EMBL" id="AE015928">
    <property type="protein sequence ID" value="AAO76370.1"/>
    <property type="molecule type" value="Genomic_DNA"/>
</dbReference>
<dbReference type="RefSeq" id="NP_810176.1">
    <property type="nucleotide sequence ID" value="NC_004663.1"/>
</dbReference>
<dbReference type="RefSeq" id="WP_008765001.1">
    <property type="nucleotide sequence ID" value="NC_004663.1"/>
</dbReference>
<dbReference type="PDB" id="3CNE">
    <property type="method" value="X-ray"/>
    <property type="resolution" value="1.99 A"/>
    <property type="chains" value="A/B/C/D=1-175"/>
</dbReference>
<dbReference type="PDB" id="4D1Y">
    <property type="method" value="X-ray"/>
    <property type="resolution" value="2.60 A"/>
    <property type="chains" value="A/B=1-175"/>
</dbReference>
<dbReference type="PDBsum" id="3CNE"/>
<dbReference type="PDBsum" id="4D1Y"/>
<dbReference type="SMR" id="Q8A8A4"/>
<dbReference type="STRING" id="226186.BT_1263"/>
<dbReference type="PaxDb" id="226186-BT_1263"/>
<dbReference type="DNASU" id="1073437"/>
<dbReference type="EnsemblBacteria" id="AAO76370">
    <property type="protein sequence ID" value="AAO76370"/>
    <property type="gene ID" value="BT_1263"/>
</dbReference>
<dbReference type="KEGG" id="bth:BT_1263"/>
<dbReference type="PATRIC" id="fig|226186.12.peg.1289"/>
<dbReference type="eggNOG" id="COG0693">
    <property type="taxonomic scope" value="Bacteria"/>
</dbReference>
<dbReference type="HOGENOM" id="CLU_1531124_0_0_10"/>
<dbReference type="InParanoid" id="Q8A8A4"/>
<dbReference type="OrthoDB" id="996290at2"/>
<dbReference type="EvolutionaryTrace" id="Q8A8A4"/>
<dbReference type="Proteomes" id="UP000001414">
    <property type="component" value="Chromosome"/>
</dbReference>
<dbReference type="GO" id="GO:0005737">
    <property type="term" value="C:cytoplasm"/>
    <property type="evidence" value="ECO:0000318"/>
    <property type="project" value="GO_Central"/>
</dbReference>
<dbReference type="GO" id="GO:0046872">
    <property type="term" value="F:metal ion binding"/>
    <property type="evidence" value="ECO:0007669"/>
    <property type="project" value="UniProtKB-KW"/>
</dbReference>
<dbReference type="GO" id="GO:0000166">
    <property type="term" value="F:nucleotide binding"/>
    <property type="evidence" value="ECO:0007669"/>
    <property type="project" value="UniProtKB-KW"/>
</dbReference>
<dbReference type="Gene3D" id="3.40.50.880">
    <property type="match status" value="1"/>
</dbReference>
<dbReference type="InterPro" id="IPR029062">
    <property type="entry name" value="Class_I_gatase-like"/>
</dbReference>
<dbReference type="InterPro" id="IPR002818">
    <property type="entry name" value="DJ-1/PfpI"/>
</dbReference>
<dbReference type="InterPro" id="IPR050325">
    <property type="entry name" value="Prot/Nucl_acid_deglycase"/>
</dbReference>
<dbReference type="PANTHER" id="PTHR48094:SF12">
    <property type="entry name" value="PARKINSON DISEASE PROTEIN 7 HOMOLOG"/>
    <property type="match status" value="1"/>
</dbReference>
<dbReference type="PANTHER" id="PTHR48094">
    <property type="entry name" value="PROTEIN/NUCLEIC ACID DEGLYCASE DJ-1-RELATED"/>
    <property type="match status" value="1"/>
</dbReference>
<dbReference type="Pfam" id="PF01965">
    <property type="entry name" value="DJ-1_PfpI"/>
    <property type="match status" value="1"/>
</dbReference>
<dbReference type="SUPFAM" id="SSF52317">
    <property type="entry name" value="Class I glutamine amidotransferase-like"/>
    <property type="match status" value="1"/>
</dbReference>